<dbReference type="EMBL" id="X14336">
    <property type="protein sequence ID" value="CAA32520.1"/>
    <property type="molecule type" value="Genomic_DNA"/>
</dbReference>
<dbReference type="PIR" id="S08084">
    <property type="entry name" value="S08084"/>
</dbReference>
<dbReference type="RefSeq" id="NP_039614.1">
    <property type="nucleotide sequence ID" value="NC_001332.1"/>
</dbReference>
<dbReference type="SMR" id="P15420"/>
<dbReference type="GeneID" id="1260716"/>
<dbReference type="KEGG" id="vg:1260716"/>
<dbReference type="OrthoDB" id="9067at10239"/>
<dbReference type="Proteomes" id="UP000000373">
    <property type="component" value="Genome"/>
</dbReference>
<dbReference type="GO" id="GO:0033644">
    <property type="term" value="C:host cell membrane"/>
    <property type="evidence" value="ECO:0007669"/>
    <property type="project" value="UniProtKB-SubCell"/>
</dbReference>
<dbReference type="GO" id="GO:0016020">
    <property type="term" value="C:membrane"/>
    <property type="evidence" value="ECO:0007669"/>
    <property type="project" value="UniProtKB-KW"/>
</dbReference>
<dbReference type="GO" id="GO:0009306">
    <property type="term" value="P:protein secretion"/>
    <property type="evidence" value="ECO:0007669"/>
    <property type="project" value="InterPro"/>
</dbReference>
<dbReference type="GO" id="GO:0099045">
    <property type="term" value="P:viral extrusion"/>
    <property type="evidence" value="ECO:0007669"/>
    <property type="project" value="UniProtKB-KW"/>
</dbReference>
<dbReference type="Gene3D" id="3.30.1370.120">
    <property type="match status" value="1"/>
</dbReference>
<dbReference type="Gene3D" id="3.55.50.30">
    <property type="match status" value="1"/>
</dbReference>
<dbReference type="InterPro" id="IPR050810">
    <property type="entry name" value="Bact_Secretion_Sys_Channel"/>
</dbReference>
<dbReference type="InterPro" id="IPR049371">
    <property type="entry name" value="GspD-like_N0"/>
</dbReference>
<dbReference type="InterPro" id="IPR001775">
    <property type="entry name" value="GspD/PilQ"/>
</dbReference>
<dbReference type="InterPro" id="IPR005644">
    <property type="entry name" value="NolW-like"/>
</dbReference>
<dbReference type="InterPro" id="IPR038591">
    <property type="entry name" value="NolW-like_sf"/>
</dbReference>
<dbReference type="InterPro" id="IPR004846">
    <property type="entry name" value="T2SS/T3SS_dom"/>
</dbReference>
<dbReference type="InterPro" id="IPR004845">
    <property type="entry name" value="T2SS_GspD_CS"/>
</dbReference>
<dbReference type="PANTHER" id="PTHR30332">
    <property type="entry name" value="PROBABLE GENERAL SECRETION PATHWAY PROTEIN D"/>
    <property type="match status" value="1"/>
</dbReference>
<dbReference type="PANTHER" id="PTHR30332:SF24">
    <property type="entry name" value="SECRETIN GSPD-RELATED"/>
    <property type="match status" value="1"/>
</dbReference>
<dbReference type="Pfam" id="PF00263">
    <property type="entry name" value="Secretin"/>
    <property type="match status" value="1"/>
</dbReference>
<dbReference type="Pfam" id="PF03958">
    <property type="entry name" value="Secretin_N"/>
    <property type="match status" value="1"/>
</dbReference>
<dbReference type="Pfam" id="PF21305">
    <property type="entry name" value="type_II_gspD_N0"/>
    <property type="match status" value="1"/>
</dbReference>
<dbReference type="PRINTS" id="PR00811">
    <property type="entry name" value="BCTERIALGSPD"/>
</dbReference>
<dbReference type="PRINTS" id="PR01032">
    <property type="entry name" value="PHAGEIV"/>
</dbReference>
<dbReference type="PROSITE" id="PS00875">
    <property type="entry name" value="T2SP_D"/>
    <property type="match status" value="1"/>
</dbReference>
<proteinExistence type="inferred from homology"/>
<accession>P15420</accession>
<evidence type="ECO:0000250" key="1"/>
<evidence type="ECO:0000255" key="2"/>
<evidence type="ECO:0000305" key="3"/>
<feature type="signal peptide" evidence="2">
    <location>
        <begin position="1"/>
        <end position="22"/>
    </location>
</feature>
<feature type="chain" id="PRO_0000209450" description="Virion export protein">
    <location>
        <begin position="23"/>
        <end position="428"/>
    </location>
</feature>
<feature type="transmembrane region" description="Helical" evidence="2">
    <location>
        <begin position="319"/>
        <end position="339"/>
    </location>
</feature>
<gene>
    <name type="primary">IV</name>
</gene>
<reference key="1">
    <citation type="submission" date="1989-02" db="EMBL/GenBank/DDBJ databases">
        <authorList>
            <person name="Schoenmakers H.F.P.M."/>
            <person name="Yu M."/>
            <person name="Konings R.N.H."/>
        </authorList>
    </citation>
    <scope>NUCLEOTIDE SEQUENCE [GENOMIC DNA]</scope>
</reference>
<keyword id="KW-1043">Host membrane</keyword>
<keyword id="KW-0472">Membrane</keyword>
<keyword id="KW-1185">Reference proteome</keyword>
<keyword id="KW-0732">Signal</keyword>
<keyword id="KW-0812">Transmembrane</keyword>
<keyword id="KW-1133">Transmembrane helix</keyword>
<keyword id="KW-1249">Viral extrusion</keyword>
<keyword id="KW-1188">Viral release from host cell</keyword>
<organism>
    <name type="scientific">Enterobacteria phage I2-2</name>
    <name type="common">Bacteriophage I2-2</name>
    <dbReference type="NCBI Taxonomy" id="10869"/>
    <lineage>
        <taxon>Viruses</taxon>
        <taxon>Monodnaviria</taxon>
        <taxon>Loebvirae</taxon>
        <taxon>Hofneiviricota</taxon>
        <taxon>Faserviricetes</taxon>
        <taxon>Tubulavirales</taxon>
        <taxon>Inoviridae</taxon>
        <taxon>Lineavirus</taxon>
    </lineage>
</organism>
<protein>
    <recommendedName>
        <fullName>Virion export protein</fullName>
    </recommendedName>
    <alternativeName>
        <fullName>Gene 4 protein</fullName>
        <shortName>G4P</shortName>
    </alternativeName>
</protein>
<name>G4P_BPI22</name>
<comment type="function">
    <text evidence="1">Acts in the assembly and extrusion of the bacteriophage by forming a channel across the host outer membrane. This channel is just large enough to allow a newly synthesized phage particle to pass through. Extrusion is a process of concomitant assembly and secretion and takes place at specific assembly sites where host inner and outer membranes are in close contacts (By similarity).</text>
</comment>
<comment type="subunit">
    <text evidence="1">Homomultimer. The channel is composed of 14 G4P subunits that confer a barrel-like structure. Interacts with G1P; this interaction results in a complex that spans the inner an outer host membranes (By similarity).</text>
</comment>
<comment type="subcellular location">
    <subcellularLocation>
        <location evidence="3">Host membrane</location>
        <topology evidence="3">Single-pass type I membrane protein</topology>
    </subcellularLocation>
</comment>
<comment type="similarity">
    <text evidence="3">Belongs to the inovirus G4P protein family.</text>
</comment>
<sequence>MKTFFAKFIVALFAFTYFSAFAEPVTLNNSPVRSFVQWYSSKTGKSVIVNPDVKGNITVFNADVNNANIDDFFKSVLNANGLVVVAGNPAVVSTPLTKLASQPSNEETYDDESDGVAYEAVPQSAAPAVPADLTVRNFNVTRVRSSDVLPLAKIFVDSNGGGNVVDYPGNNSLVVSGSAQVMPALSDFITSIDVAREQVLIQSLMFETSVSNGVDLSFALALASGGKVAGGFNTSALGTALSTAGGSFGIFNGNILALSLQAVQSDSNSKVISTPRILTQSGQSGYISVGQNVPFVTGKVTGEAASVNNPFQTIERRDVGVSLKVTPVVMGNGQLVLTIDTKADSLSNQAIASDIITNQRQIQTTVQIKDGQTLLLGGLISSNQFDSDRSVPFMSKIPLIGWLFRSHSDSKDDRTMFVLLTAHVIRAL</sequence>
<organismHost>
    <name type="scientific">Escherichia coli</name>
    <dbReference type="NCBI Taxonomy" id="562"/>
</organismHost>